<feature type="chain" id="PRO_1000164804" description="Uracil phosphoribosyltransferase">
    <location>
        <begin position="1"/>
        <end position="209"/>
    </location>
</feature>
<feature type="binding site" evidence="1">
    <location>
        <position position="79"/>
    </location>
    <ligand>
        <name>5-phospho-alpha-D-ribose 1-diphosphate</name>
        <dbReference type="ChEBI" id="CHEBI:58017"/>
    </ligand>
</feature>
<feature type="binding site" evidence="1">
    <location>
        <position position="104"/>
    </location>
    <ligand>
        <name>5-phospho-alpha-D-ribose 1-diphosphate</name>
        <dbReference type="ChEBI" id="CHEBI:58017"/>
    </ligand>
</feature>
<feature type="binding site" evidence="1">
    <location>
        <begin position="131"/>
        <end position="139"/>
    </location>
    <ligand>
        <name>5-phospho-alpha-D-ribose 1-diphosphate</name>
        <dbReference type="ChEBI" id="CHEBI:58017"/>
    </ligand>
</feature>
<feature type="binding site" evidence="1">
    <location>
        <position position="194"/>
    </location>
    <ligand>
        <name>uracil</name>
        <dbReference type="ChEBI" id="CHEBI:17568"/>
    </ligand>
</feature>
<feature type="binding site" evidence="1">
    <location>
        <begin position="199"/>
        <end position="201"/>
    </location>
    <ligand>
        <name>uracil</name>
        <dbReference type="ChEBI" id="CHEBI:17568"/>
    </ligand>
</feature>
<feature type="binding site" evidence="1">
    <location>
        <position position="200"/>
    </location>
    <ligand>
        <name>5-phospho-alpha-D-ribose 1-diphosphate</name>
        <dbReference type="ChEBI" id="CHEBI:58017"/>
    </ligand>
</feature>
<organism>
    <name type="scientific">Rhizobium rhizogenes (strain K84 / ATCC BAA-868)</name>
    <name type="common">Agrobacterium radiobacter</name>
    <dbReference type="NCBI Taxonomy" id="311403"/>
    <lineage>
        <taxon>Bacteria</taxon>
        <taxon>Pseudomonadati</taxon>
        <taxon>Pseudomonadota</taxon>
        <taxon>Alphaproteobacteria</taxon>
        <taxon>Hyphomicrobiales</taxon>
        <taxon>Rhizobiaceae</taxon>
        <taxon>Rhizobium/Agrobacterium group</taxon>
        <taxon>Rhizobium</taxon>
    </lineage>
</organism>
<gene>
    <name evidence="1" type="primary">upp</name>
    <name type="ordered locus">Arad_0349</name>
</gene>
<proteinExistence type="inferred from homology"/>
<name>UPP_RHIR8</name>
<keyword id="KW-0021">Allosteric enzyme</keyword>
<keyword id="KW-0328">Glycosyltransferase</keyword>
<keyword id="KW-0342">GTP-binding</keyword>
<keyword id="KW-0460">Magnesium</keyword>
<keyword id="KW-0547">Nucleotide-binding</keyword>
<keyword id="KW-0808">Transferase</keyword>
<accession>B9J6V7</accession>
<comment type="function">
    <text evidence="1">Catalyzes the conversion of uracil and 5-phospho-alpha-D-ribose 1-diphosphate (PRPP) to UMP and diphosphate.</text>
</comment>
<comment type="catalytic activity">
    <reaction evidence="1">
        <text>UMP + diphosphate = 5-phospho-alpha-D-ribose 1-diphosphate + uracil</text>
        <dbReference type="Rhea" id="RHEA:13017"/>
        <dbReference type="ChEBI" id="CHEBI:17568"/>
        <dbReference type="ChEBI" id="CHEBI:33019"/>
        <dbReference type="ChEBI" id="CHEBI:57865"/>
        <dbReference type="ChEBI" id="CHEBI:58017"/>
        <dbReference type="EC" id="2.4.2.9"/>
    </reaction>
</comment>
<comment type="cofactor">
    <cofactor evidence="1">
        <name>Mg(2+)</name>
        <dbReference type="ChEBI" id="CHEBI:18420"/>
    </cofactor>
    <text evidence="1">Binds 1 Mg(2+) ion per subunit. The magnesium is bound as Mg-PRPP.</text>
</comment>
<comment type="activity regulation">
    <text evidence="1">Allosterically activated by GTP.</text>
</comment>
<comment type="pathway">
    <text evidence="1">Pyrimidine metabolism; UMP biosynthesis via salvage pathway; UMP from uracil: step 1/1.</text>
</comment>
<comment type="similarity">
    <text evidence="1">Belongs to the UPRTase family.</text>
</comment>
<evidence type="ECO:0000255" key="1">
    <source>
        <dbReference type="HAMAP-Rule" id="MF_01218"/>
    </source>
</evidence>
<protein>
    <recommendedName>
        <fullName evidence="1">Uracil phosphoribosyltransferase</fullName>
        <ecNumber evidence="1">2.4.2.9</ecNumber>
    </recommendedName>
    <alternativeName>
        <fullName evidence="1">UMP pyrophosphorylase</fullName>
    </alternativeName>
    <alternativeName>
        <fullName evidence="1">UPRTase</fullName>
    </alternativeName>
</protein>
<dbReference type="EC" id="2.4.2.9" evidence="1"/>
<dbReference type="EMBL" id="CP000628">
    <property type="protein sequence ID" value="ACM25063.1"/>
    <property type="molecule type" value="Genomic_DNA"/>
</dbReference>
<dbReference type="RefSeq" id="WP_012650768.1">
    <property type="nucleotide sequence ID" value="NC_011985.1"/>
</dbReference>
<dbReference type="SMR" id="B9J6V7"/>
<dbReference type="STRING" id="311403.Arad_0349"/>
<dbReference type="GeneID" id="86850707"/>
<dbReference type="KEGG" id="ara:Arad_0349"/>
<dbReference type="eggNOG" id="COG0035">
    <property type="taxonomic scope" value="Bacteria"/>
</dbReference>
<dbReference type="HOGENOM" id="CLU_067096_2_2_5"/>
<dbReference type="UniPathway" id="UPA00574">
    <property type="reaction ID" value="UER00636"/>
</dbReference>
<dbReference type="Proteomes" id="UP000001600">
    <property type="component" value="Chromosome 1"/>
</dbReference>
<dbReference type="GO" id="GO:0005525">
    <property type="term" value="F:GTP binding"/>
    <property type="evidence" value="ECO:0007669"/>
    <property type="project" value="UniProtKB-KW"/>
</dbReference>
<dbReference type="GO" id="GO:0000287">
    <property type="term" value="F:magnesium ion binding"/>
    <property type="evidence" value="ECO:0007669"/>
    <property type="project" value="UniProtKB-UniRule"/>
</dbReference>
<dbReference type="GO" id="GO:0004845">
    <property type="term" value="F:uracil phosphoribosyltransferase activity"/>
    <property type="evidence" value="ECO:0007669"/>
    <property type="project" value="UniProtKB-UniRule"/>
</dbReference>
<dbReference type="GO" id="GO:0044206">
    <property type="term" value="P:UMP salvage"/>
    <property type="evidence" value="ECO:0007669"/>
    <property type="project" value="UniProtKB-UniRule"/>
</dbReference>
<dbReference type="GO" id="GO:0006223">
    <property type="term" value="P:uracil salvage"/>
    <property type="evidence" value="ECO:0007669"/>
    <property type="project" value="InterPro"/>
</dbReference>
<dbReference type="CDD" id="cd06223">
    <property type="entry name" value="PRTases_typeI"/>
    <property type="match status" value="1"/>
</dbReference>
<dbReference type="FunFam" id="3.40.50.2020:FF:000003">
    <property type="entry name" value="Uracil phosphoribosyltransferase"/>
    <property type="match status" value="1"/>
</dbReference>
<dbReference type="Gene3D" id="3.40.50.2020">
    <property type="match status" value="1"/>
</dbReference>
<dbReference type="HAMAP" id="MF_01218_B">
    <property type="entry name" value="Upp_B"/>
    <property type="match status" value="1"/>
</dbReference>
<dbReference type="InterPro" id="IPR000836">
    <property type="entry name" value="PRibTrfase_dom"/>
</dbReference>
<dbReference type="InterPro" id="IPR029057">
    <property type="entry name" value="PRTase-like"/>
</dbReference>
<dbReference type="InterPro" id="IPR034332">
    <property type="entry name" value="Upp_B"/>
</dbReference>
<dbReference type="InterPro" id="IPR050054">
    <property type="entry name" value="UPRTase/APRTase"/>
</dbReference>
<dbReference type="InterPro" id="IPR005765">
    <property type="entry name" value="Ura_phspho_trans"/>
</dbReference>
<dbReference type="NCBIfam" id="NF001097">
    <property type="entry name" value="PRK00129.1"/>
    <property type="match status" value="1"/>
</dbReference>
<dbReference type="NCBIfam" id="TIGR01091">
    <property type="entry name" value="upp"/>
    <property type="match status" value="1"/>
</dbReference>
<dbReference type="PANTHER" id="PTHR32315">
    <property type="entry name" value="ADENINE PHOSPHORIBOSYLTRANSFERASE"/>
    <property type="match status" value="1"/>
</dbReference>
<dbReference type="PANTHER" id="PTHR32315:SF4">
    <property type="entry name" value="URACIL PHOSPHORIBOSYLTRANSFERASE, CHLOROPLASTIC"/>
    <property type="match status" value="1"/>
</dbReference>
<dbReference type="Pfam" id="PF14681">
    <property type="entry name" value="UPRTase"/>
    <property type="match status" value="1"/>
</dbReference>
<dbReference type="SUPFAM" id="SSF53271">
    <property type="entry name" value="PRTase-like"/>
    <property type="match status" value="1"/>
</dbReference>
<sequence length="209" mass="23140">MDGVTVIDHPLVQHKLTIMRKKETSTGSFRRLLREISTLLCYEVTRDLEMTMETIETPLQPMESPILEGKKLVFASILRAGNGLLEGMLDLVPSARVSHIGVYRDHETLQPVEYYFKAPEDISERLIIVVDPMLATGNSSIAAIDKLKERGAHNIRFLCLLAAPEGIANFRAAHPDVPVFTAAIDSHLNELGYIVPGLGDAGDRMYGTK</sequence>
<reference key="1">
    <citation type="journal article" date="2009" name="J. Bacteriol.">
        <title>Genome sequences of three Agrobacterium biovars help elucidate the evolution of multichromosome genomes in bacteria.</title>
        <authorList>
            <person name="Slater S.C."/>
            <person name="Goldman B.S."/>
            <person name="Goodner B."/>
            <person name="Setubal J.C."/>
            <person name="Farrand S.K."/>
            <person name="Nester E.W."/>
            <person name="Burr T.J."/>
            <person name="Banta L."/>
            <person name="Dickerman A.W."/>
            <person name="Paulsen I."/>
            <person name="Otten L."/>
            <person name="Suen G."/>
            <person name="Welch R."/>
            <person name="Almeida N.F."/>
            <person name="Arnold F."/>
            <person name="Burton O.T."/>
            <person name="Du Z."/>
            <person name="Ewing A."/>
            <person name="Godsy E."/>
            <person name="Heisel S."/>
            <person name="Houmiel K.L."/>
            <person name="Jhaveri J."/>
            <person name="Lu J."/>
            <person name="Miller N.M."/>
            <person name="Norton S."/>
            <person name="Chen Q."/>
            <person name="Phoolcharoen W."/>
            <person name="Ohlin V."/>
            <person name="Ondrusek D."/>
            <person name="Pride N."/>
            <person name="Stricklin S.L."/>
            <person name="Sun J."/>
            <person name="Wheeler C."/>
            <person name="Wilson L."/>
            <person name="Zhu H."/>
            <person name="Wood D.W."/>
        </authorList>
    </citation>
    <scope>NUCLEOTIDE SEQUENCE [LARGE SCALE GENOMIC DNA]</scope>
    <source>
        <strain>K84 / ATCC BAA-868</strain>
    </source>
</reference>